<keyword id="KW-0004">4Fe-4S</keyword>
<keyword id="KW-0249">Electron transport</keyword>
<keyword id="KW-0408">Iron</keyword>
<keyword id="KW-0411">Iron-sulfur</keyword>
<keyword id="KW-0479">Metal-binding</keyword>
<keyword id="KW-0574">Periplasm</keyword>
<keyword id="KW-1185">Reference proteome</keyword>
<keyword id="KW-0677">Repeat</keyword>
<keyword id="KW-0732">Signal</keyword>
<keyword id="KW-0813">Transport</keyword>
<proteinExistence type="evidence at protein level"/>
<feature type="signal peptide" description="Tat-type signal" evidence="1">
    <location>
        <begin position="1"/>
        <end position="41"/>
    </location>
</feature>
<feature type="chain" id="PRO_0000159279" description="Ferredoxin-type protein NapG">
    <location>
        <begin position="42"/>
        <end position="231"/>
    </location>
</feature>
<feature type="domain" description="4Fe-4S ferredoxin-type 1" evidence="2">
    <location>
        <begin position="50"/>
        <end position="81"/>
    </location>
</feature>
<feature type="domain" description="4Fe-4S ferredoxin-type 2" evidence="2">
    <location>
        <begin position="89"/>
        <end position="121"/>
    </location>
</feature>
<feature type="domain" description="4Fe-4S ferredoxin-type 3" evidence="2">
    <location>
        <begin position="130"/>
        <end position="166"/>
    </location>
</feature>
<feature type="domain" description="4Fe-4S ferredoxin-type 4" evidence="2">
    <location>
        <begin position="177"/>
        <end position="208"/>
    </location>
</feature>
<feature type="binding site" evidence="2">
    <location>
        <position position="61"/>
    </location>
    <ligand>
        <name>[4Fe-4S] cluster</name>
        <dbReference type="ChEBI" id="CHEBI:49883"/>
        <label>1</label>
    </ligand>
</feature>
<feature type="binding site" evidence="2">
    <location>
        <position position="64"/>
    </location>
    <ligand>
        <name>[4Fe-4S] cluster</name>
        <dbReference type="ChEBI" id="CHEBI:49883"/>
        <label>1</label>
    </ligand>
</feature>
<feature type="binding site" evidence="2">
    <location>
        <position position="67"/>
    </location>
    <ligand>
        <name>[4Fe-4S] cluster</name>
        <dbReference type="ChEBI" id="CHEBI:49883"/>
        <label>1</label>
    </ligand>
</feature>
<feature type="binding site" evidence="2">
    <location>
        <position position="71"/>
    </location>
    <ligand>
        <name>[4Fe-4S] cluster</name>
        <dbReference type="ChEBI" id="CHEBI:49883"/>
        <label>1</label>
    </ligand>
</feature>
<feature type="binding site" evidence="2">
    <location>
        <position position="99"/>
    </location>
    <ligand>
        <name>[4Fe-4S] cluster</name>
        <dbReference type="ChEBI" id="CHEBI:49883"/>
        <label>2</label>
    </ligand>
</feature>
<feature type="binding site" evidence="2">
    <location>
        <position position="102"/>
    </location>
    <ligand>
        <name>[4Fe-4S] cluster</name>
        <dbReference type="ChEBI" id="CHEBI:49883"/>
        <label>2</label>
    </ligand>
</feature>
<feature type="binding site" evidence="2">
    <location>
        <position position="107"/>
    </location>
    <ligand>
        <name>[4Fe-4S] cluster</name>
        <dbReference type="ChEBI" id="CHEBI:49883"/>
        <label>2</label>
    </ligand>
</feature>
<feature type="binding site" evidence="2">
    <location>
        <position position="111"/>
    </location>
    <ligand>
        <name>[4Fe-4S] cluster</name>
        <dbReference type="ChEBI" id="CHEBI:49883"/>
        <label>2</label>
    </ligand>
</feature>
<feature type="binding site" evidence="2">
    <location>
        <position position="139"/>
    </location>
    <ligand>
        <name>[4Fe-4S] cluster</name>
        <dbReference type="ChEBI" id="CHEBI:49883"/>
        <label>3</label>
    </ligand>
</feature>
<feature type="binding site" evidence="2">
    <location>
        <position position="147"/>
    </location>
    <ligand>
        <name>[4Fe-4S] cluster</name>
        <dbReference type="ChEBI" id="CHEBI:49883"/>
        <label>3</label>
    </ligand>
</feature>
<feature type="binding site" evidence="2">
    <location>
        <position position="150"/>
    </location>
    <ligand>
        <name>[4Fe-4S] cluster</name>
        <dbReference type="ChEBI" id="CHEBI:49883"/>
        <label>3</label>
    </ligand>
</feature>
<feature type="binding site" evidence="2">
    <location>
        <position position="154"/>
    </location>
    <ligand>
        <name>[4Fe-4S] cluster</name>
        <dbReference type="ChEBI" id="CHEBI:49883"/>
        <label>3</label>
    </ligand>
</feature>
<feature type="binding site" evidence="2">
    <location>
        <position position="186"/>
    </location>
    <ligand>
        <name>[4Fe-4S] cluster</name>
        <dbReference type="ChEBI" id="CHEBI:49883"/>
        <label>4</label>
    </ligand>
</feature>
<feature type="binding site" evidence="2">
    <location>
        <position position="189"/>
    </location>
    <ligand>
        <name>[4Fe-4S] cluster</name>
        <dbReference type="ChEBI" id="CHEBI:49883"/>
        <label>4</label>
    </ligand>
</feature>
<feature type="binding site" evidence="2">
    <location>
        <position position="192"/>
    </location>
    <ligand>
        <name>[4Fe-4S] cluster</name>
        <dbReference type="ChEBI" id="CHEBI:49883"/>
        <label>4</label>
    </ligand>
</feature>
<feature type="binding site" evidence="2">
    <location>
        <position position="196"/>
    </location>
    <ligand>
        <name>[4Fe-4S] cluster</name>
        <dbReference type="ChEBI" id="CHEBI:49883"/>
        <label>4</label>
    </ligand>
</feature>
<feature type="mutagenesis site" description="Cannot complement a deletion mutant." evidence="4">
    <original>RR</original>
    <variation>AA</variation>
    <location>
        <begin position="11"/>
        <end position="12"/>
    </location>
</feature>
<evidence type="ECO:0000255" key="1">
    <source>
        <dbReference type="PROSITE-ProRule" id="PRU00648"/>
    </source>
</evidence>
<evidence type="ECO:0000255" key="2">
    <source>
        <dbReference type="PROSITE-ProRule" id="PRU00711"/>
    </source>
</evidence>
<evidence type="ECO:0000269" key="3">
    <source>
    </source>
</evidence>
<evidence type="ECO:0000269" key="4">
    <source>
    </source>
</evidence>
<evidence type="ECO:0000269" key="5">
    <source>
    </source>
</evidence>
<evidence type="ECO:0000305" key="6"/>
<sequence length="231" mass="24925">MSRSAKPQNGRRRFLRDVVRTAGGLAAVGVALGLQQQTARASGVRLRPPGAINENAFASACVRCGQCVQACPYDTLKLATLASGLSAGTPYFVARDIPCEMCEDIPCAKVCPSGALDREIESIDDARMGLAVLVDQENCLNFQGLRCDVCYRECPKIDEAITLELERNTRTGKHARFLPTVHSDACTGCGKCEKVCVLEQPAIKVLPLSLAKGELGHHYRFGWLEGNNGKS</sequence>
<comment type="function">
    <text evidence="3 4">Required for electron transfer from ubiquinol, via NapC, to the periplasmic nitrate reductase NapAB complex.</text>
</comment>
<comment type="cofactor">
    <cofactor evidence="2">
        <name>[4Fe-4S] cluster</name>
        <dbReference type="ChEBI" id="CHEBI:49883"/>
    </cofactor>
    <text evidence="2">Binds 4 [4Fe-4S] cluster.</text>
</comment>
<comment type="subcellular location">
    <subcellularLocation>
        <location evidence="4">Periplasm</location>
    </subcellularLocation>
</comment>
<comment type="PTM">
    <text evidence="5 6">Exported by the Tat system (PubMed:17218314). The position of the signal peptide cleavage has not been experimentally proven.</text>
</comment>
<comment type="disruption phenotype">
    <text evidence="3">Deletion of both napG and napH genes has little effect on the overall rate of nitrate reduction during growth in the glycerol/nitrate medium. However, during growth in the glucose/nitrate medium, the double mutant shows a decreased rate of electron transfer that correlates with decreased NapAB activity.</text>
</comment>
<comment type="sequence caution" evidence="6">
    <conflict type="frameshift">
        <sequence resource="EMBL-CDS" id="AAA16397"/>
    </conflict>
</comment>
<comment type="sequence caution" evidence="6">
    <conflict type="frameshift">
        <sequence resource="EMBL-CDS" id="AAA16398"/>
    </conflict>
</comment>
<protein>
    <recommendedName>
        <fullName evidence="6">Ferredoxin-type protein NapG</fullName>
    </recommendedName>
    <alternativeName>
        <fullName evidence="6">Ubiquinol--[NapC cytochrome c] reductase NapG subunit</fullName>
    </alternativeName>
</protein>
<reference key="1">
    <citation type="submission" date="1993-10" db="EMBL/GenBank/DDBJ databases">
        <title>Automated multiplex sequencing of the E.coli genome.</title>
        <authorList>
            <person name="Richterich P."/>
            <person name="Lakey N."/>
            <person name="Gryan G."/>
            <person name="Jaehn L."/>
            <person name="Mintz L."/>
            <person name="Robison K."/>
            <person name="Church G.M."/>
        </authorList>
    </citation>
    <scope>NUCLEOTIDE SEQUENCE [GENOMIC DNA]</scope>
    <source>
        <strain>K12 / BHB2600</strain>
    </source>
</reference>
<reference key="2">
    <citation type="journal article" date="1997" name="Science">
        <title>The complete genome sequence of Escherichia coli K-12.</title>
        <authorList>
            <person name="Blattner F.R."/>
            <person name="Plunkett G. III"/>
            <person name="Bloch C.A."/>
            <person name="Perna N.T."/>
            <person name="Burland V."/>
            <person name="Riley M."/>
            <person name="Collado-Vides J."/>
            <person name="Glasner J.D."/>
            <person name="Rode C.K."/>
            <person name="Mayhew G.F."/>
            <person name="Gregor J."/>
            <person name="Davis N.W."/>
            <person name="Kirkpatrick H.A."/>
            <person name="Goeden M.A."/>
            <person name="Rose D.J."/>
            <person name="Mau B."/>
            <person name="Shao Y."/>
        </authorList>
    </citation>
    <scope>NUCLEOTIDE SEQUENCE [LARGE SCALE GENOMIC DNA]</scope>
    <source>
        <strain>K12 / MG1655 / ATCC 47076</strain>
    </source>
</reference>
<reference key="3">
    <citation type="journal article" date="2006" name="Mol. Syst. Biol.">
        <title>Highly accurate genome sequences of Escherichia coli K-12 strains MG1655 and W3110.</title>
        <authorList>
            <person name="Hayashi K."/>
            <person name="Morooka N."/>
            <person name="Yamamoto Y."/>
            <person name="Fujita K."/>
            <person name="Isono K."/>
            <person name="Choi S."/>
            <person name="Ohtsubo E."/>
            <person name="Baba T."/>
            <person name="Wanner B.L."/>
            <person name="Mori H."/>
            <person name="Horiuchi T."/>
        </authorList>
    </citation>
    <scope>NUCLEOTIDE SEQUENCE [LARGE SCALE GENOMIC DNA]</scope>
    <source>
        <strain>K12 / W3110 / ATCC 27325 / DSM 5911</strain>
    </source>
</reference>
<reference key="4">
    <citation type="journal article" date="2002" name="Mol. Microbiol.">
        <title>Roles of NapF, NapG and NapH, subunits of the Escherichia coli periplasmic nitrate reductase, in ubiquinol oxidation.</title>
        <authorList>
            <person name="Brondijk T.H."/>
            <person name="Fiegen D."/>
            <person name="Richardson D.J."/>
            <person name="Cole J.A."/>
        </authorList>
    </citation>
    <scope>FUNCTION</scope>
    <scope>DISRUPTION PHENOTYPE</scope>
</reference>
<reference key="5">
    <citation type="journal article" date="2004" name="Biochem. J.">
        <title>NapGH components of the periplasmic nitrate reductase of Escherichia coli K-12: location, topology and physiological roles in quinol oxidation and redox balancing.</title>
        <authorList>
            <person name="Brondijk T.H."/>
            <person name="Nilavongse A."/>
            <person name="Filenko N."/>
            <person name="Richardson D.J."/>
            <person name="Cole J.A."/>
        </authorList>
    </citation>
    <scope>FUNCTION</scope>
    <scope>SUBCELLULAR LOCATION</scope>
    <scope>MUTAGENESIS OF 11-ARG-ARG-12</scope>
</reference>
<reference key="6">
    <citation type="journal article" date="2007" name="J. Biol. Chem.">
        <title>Export pathway selectivity of Escherichia coli twin arginine translocation signal peptides.</title>
        <authorList>
            <person name="Tullman-Ercek D."/>
            <person name="DeLisa M.P."/>
            <person name="Kawarasaki Y."/>
            <person name="Iranpour P."/>
            <person name="Ribnicky B."/>
            <person name="Palmer T."/>
            <person name="Georgiou G."/>
        </authorList>
    </citation>
    <scope>EXPORT VIA THE TAT-SYSTEM</scope>
</reference>
<gene>
    <name type="primary">napG</name>
    <name type="synonym">yojA</name>
    <name type="synonym">yojB</name>
    <name type="ordered locus">b2205</name>
    <name type="ordered locus">JW2193</name>
</gene>
<accession>P0AAL3</accession>
<accession>P33935</accession>
<accession>P33936</accession>
<accession>Q2MAN8</accession>
<name>NAPG_ECOLI</name>
<organism>
    <name type="scientific">Escherichia coli (strain K12)</name>
    <dbReference type="NCBI Taxonomy" id="83333"/>
    <lineage>
        <taxon>Bacteria</taxon>
        <taxon>Pseudomonadati</taxon>
        <taxon>Pseudomonadota</taxon>
        <taxon>Gammaproteobacteria</taxon>
        <taxon>Enterobacterales</taxon>
        <taxon>Enterobacteriaceae</taxon>
        <taxon>Escherichia</taxon>
    </lineage>
</organism>
<dbReference type="EMBL" id="U00008">
    <property type="protein sequence ID" value="AAA16398.1"/>
    <property type="status" value="ALT_FRAME"/>
    <property type="molecule type" value="Genomic_DNA"/>
</dbReference>
<dbReference type="EMBL" id="U00008">
    <property type="protein sequence ID" value="AAA16397.1"/>
    <property type="status" value="ALT_FRAME"/>
    <property type="molecule type" value="Genomic_DNA"/>
</dbReference>
<dbReference type="EMBL" id="U00096">
    <property type="protein sequence ID" value="AAC75265.1"/>
    <property type="molecule type" value="Genomic_DNA"/>
</dbReference>
<dbReference type="EMBL" id="AP009048">
    <property type="protein sequence ID" value="BAE76668.1"/>
    <property type="molecule type" value="Genomic_DNA"/>
</dbReference>
<dbReference type="PIR" id="C64990">
    <property type="entry name" value="C64990"/>
</dbReference>
<dbReference type="RefSeq" id="NP_416709.1">
    <property type="nucleotide sequence ID" value="NC_000913.3"/>
</dbReference>
<dbReference type="RefSeq" id="WP_000091291.1">
    <property type="nucleotide sequence ID" value="NZ_STEB01000002.1"/>
</dbReference>
<dbReference type="BioGRID" id="4262222">
    <property type="interactions" value="20"/>
</dbReference>
<dbReference type="FunCoup" id="P0AAL3">
    <property type="interactions" value="196"/>
</dbReference>
<dbReference type="IntAct" id="P0AAL3">
    <property type="interactions" value="4"/>
</dbReference>
<dbReference type="STRING" id="511145.b2205"/>
<dbReference type="TCDB" id="3.D.11.1.1">
    <property type="family name" value="the periplasmic nitrate reductase complex (nap) complex family"/>
</dbReference>
<dbReference type="jPOST" id="P0AAL3"/>
<dbReference type="PaxDb" id="511145-b2205"/>
<dbReference type="EnsemblBacteria" id="AAC75265">
    <property type="protein sequence ID" value="AAC75265"/>
    <property type="gene ID" value="b2205"/>
</dbReference>
<dbReference type="GeneID" id="93774973"/>
<dbReference type="GeneID" id="945544"/>
<dbReference type="KEGG" id="ecj:JW2193"/>
<dbReference type="KEGG" id="eco:b2205"/>
<dbReference type="KEGG" id="ecoc:C3026_12320"/>
<dbReference type="PATRIC" id="fig|1411691.4.peg.31"/>
<dbReference type="EchoBASE" id="EB1993"/>
<dbReference type="eggNOG" id="COG0437">
    <property type="taxonomic scope" value="Bacteria"/>
</dbReference>
<dbReference type="HOGENOM" id="CLU_077329_0_0_6"/>
<dbReference type="InParanoid" id="P0AAL3"/>
<dbReference type="OMA" id="IDHETCL"/>
<dbReference type="OrthoDB" id="9808559at2"/>
<dbReference type="PhylomeDB" id="P0AAL3"/>
<dbReference type="BioCyc" id="EcoCyc:NAPG-MONOMER"/>
<dbReference type="BioCyc" id="MetaCyc:NAPG-MONOMER"/>
<dbReference type="PHI-base" id="PHI:10523"/>
<dbReference type="PHI-base" id="PHI:10986"/>
<dbReference type="PRO" id="PR:P0AAL3"/>
<dbReference type="Proteomes" id="UP000000625">
    <property type="component" value="Chromosome"/>
</dbReference>
<dbReference type="GO" id="GO:0042597">
    <property type="term" value="C:periplasmic space"/>
    <property type="evidence" value="ECO:0007669"/>
    <property type="project" value="UniProtKB-SubCell"/>
</dbReference>
<dbReference type="GO" id="GO:0005886">
    <property type="term" value="C:plasma membrane"/>
    <property type="evidence" value="ECO:0007005"/>
    <property type="project" value="EcoCyc"/>
</dbReference>
<dbReference type="GO" id="GO:0051539">
    <property type="term" value="F:4 iron, 4 sulfur cluster binding"/>
    <property type="evidence" value="ECO:0007669"/>
    <property type="project" value="UniProtKB-KW"/>
</dbReference>
<dbReference type="GO" id="GO:0046872">
    <property type="term" value="F:metal ion binding"/>
    <property type="evidence" value="ECO:0007669"/>
    <property type="project" value="UniProtKB-KW"/>
</dbReference>
<dbReference type="CDD" id="cd16373">
    <property type="entry name" value="DMSOR_beta_like"/>
    <property type="match status" value="1"/>
</dbReference>
<dbReference type="FunFam" id="3.30.70.20:FF:000019">
    <property type="entry name" value="Ferredoxin-type protein NapG"/>
    <property type="match status" value="1"/>
</dbReference>
<dbReference type="FunFam" id="3.30.70.20:FF:000021">
    <property type="entry name" value="MauM/NapG family ferredoxin-type protein"/>
    <property type="match status" value="1"/>
</dbReference>
<dbReference type="Gene3D" id="3.30.70.20">
    <property type="match status" value="2"/>
</dbReference>
<dbReference type="InterPro" id="IPR017896">
    <property type="entry name" value="4Fe4S_Fe-S-bd"/>
</dbReference>
<dbReference type="InterPro" id="IPR017900">
    <property type="entry name" value="4Fe4S_Fe_S_CS"/>
</dbReference>
<dbReference type="InterPro" id="IPR004494">
    <property type="entry name" value="MauM_NapG"/>
</dbReference>
<dbReference type="InterPro" id="IPR050294">
    <property type="entry name" value="RnfB_subfamily"/>
</dbReference>
<dbReference type="InterPro" id="IPR006311">
    <property type="entry name" value="TAT_signal"/>
</dbReference>
<dbReference type="NCBIfam" id="TIGR00397">
    <property type="entry name" value="mauM_napG"/>
    <property type="match status" value="1"/>
</dbReference>
<dbReference type="NCBIfam" id="NF007012">
    <property type="entry name" value="PRK09476.1"/>
    <property type="match status" value="1"/>
</dbReference>
<dbReference type="PANTHER" id="PTHR42859:SF10">
    <property type="entry name" value="DIMETHYLSULFOXIDE REDUCTASE CHAIN B"/>
    <property type="match status" value="1"/>
</dbReference>
<dbReference type="PANTHER" id="PTHR42859">
    <property type="entry name" value="OXIDOREDUCTASE"/>
    <property type="match status" value="1"/>
</dbReference>
<dbReference type="Pfam" id="PF12800">
    <property type="entry name" value="Fer4_4"/>
    <property type="match status" value="1"/>
</dbReference>
<dbReference type="Pfam" id="PF12838">
    <property type="entry name" value="Fer4_7"/>
    <property type="match status" value="1"/>
</dbReference>
<dbReference type="SUPFAM" id="SSF54862">
    <property type="entry name" value="4Fe-4S ferredoxins"/>
    <property type="match status" value="1"/>
</dbReference>
<dbReference type="PROSITE" id="PS00198">
    <property type="entry name" value="4FE4S_FER_1"/>
    <property type="match status" value="1"/>
</dbReference>
<dbReference type="PROSITE" id="PS51379">
    <property type="entry name" value="4FE4S_FER_2"/>
    <property type="match status" value="4"/>
</dbReference>
<dbReference type="PROSITE" id="PS51318">
    <property type="entry name" value="TAT"/>
    <property type="match status" value="1"/>
</dbReference>